<gene>
    <name type="ordered locus">lwe1908</name>
</gene>
<comment type="similarity">
    <text evidence="1">Belongs to the UPF0398 family.</text>
</comment>
<sequence length="182" mass="20865">MKSIAVTGYKNFELGIFKKDADEAIYIKETMKRHLVPLIEDGLEWVIISGQLGIELWAGEVVGELKKEAYAIKLAILEPFENQSGNWNEANKIWASEVLTIADYHAFITKRPYENPSQFAARDGFIIDNTDGAILVYDLEKEGSPKFFYDRAKLAKERSDYYLECIDFYALQDVVEDMNQAF</sequence>
<name>Y1908_LISW6</name>
<feature type="chain" id="PRO_1000069217" description="UPF0398 protein lwe1908">
    <location>
        <begin position="1"/>
        <end position="182"/>
    </location>
</feature>
<reference key="1">
    <citation type="journal article" date="2006" name="J. Bacteriol.">
        <title>Whole-genome sequence of Listeria welshimeri reveals common steps in genome reduction with Listeria innocua as compared to Listeria monocytogenes.</title>
        <authorList>
            <person name="Hain T."/>
            <person name="Steinweg C."/>
            <person name="Kuenne C.T."/>
            <person name="Billion A."/>
            <person name="Ghai R."/>
            <person name="Chatterjee S.S."/>
            <person name="Domann E."/>
            <person name="Kaerst U."/>
            <person name="Goesmann A."/>
            <person name="Bekel T."/>
            <person name="Bartels D."/>
            <person name="Kaiser O."/>
            <person name="Meyer F."/>
            <person name="Puehler A."/>
            <person name="Weisshaar B."/>
            <person name="Wehland J."/>
            <person name="Liang C."/>
            <person name="Dandekar T."/>
            <person name="Lampidis R."/>
            <person name="Kreft J."/>
            <person name="Goebel W."/>
            <person name="Chakraborty T."/>
        </authorList>
    </citation>
    <scope>NUCLEOTIDE SEQUENCE [LARGE SCALE GENOMIC DNA]</scope>
    <source>
        <strain>ATCC 35897 / DSM 20650 / CCUG 15529 / CIP 8149 / NCTC 11857 / SLCC 5334 / V8</strain>
    </source>
</reference>
<organism>
    <name type="scientific">Listeria welshimeri serovar 6b (strain ATCC 35897 / DSM 20650 / CCUG 15529 / CIP 8149 / NCTC 11857 / SLCC 5334 / V8)</name>
    <dbReference type="NCBI Taxonomy" id="386043"/>
    <lineage>
        <taxon>Bacteria</taxon>
        <taxon>Bacillati</taxon>
        <taxon>Bacillota</taxon>
        <taxon>Bacilli</taxon>
        <taxon>Bacillales</taxon>
        <taxon>Listeriaceae</taxon>
        <taxon>Listeria</taxon>
    </lineage>
</organism>
<accession>A0AJZ4</accession>
<dbReference type="EMBL" id="AM263198">
    <property type="protein sequence ID" value="CAK21326.1"/>
    <property type="molecule type" value="Genomic_DNA"/>
</dbReference>
<dbReference type="RefSeq" id="WP_011702674.1">
    <property type="nucleotide sequence ID" value="NC_008555.1"/>
</dbReference>
<dbReference type="SMR" id="A0AJZ4"/>
<dbReference type="STRING" id="386043.lwe1908"/>
<dbReference type="GeneID" id="61189810"/>
<dbReference type="KEGG" id="lwe:lwe1908"/>
<dbReference type="eggNOG" id="COG4474">
    <property type="taxonomic scope" value="Bacteria"/>
</dbReference>
<dbReference type="HOGENOM" id="CLU_105319_0_0_9"/>
<dbReference type="OrthoDB" id="2301957at2"/>
<dbReference type="Proteomes" id="UP000000779">
    <property type="component" value="Chromosome"/>
</dbReference>
<dbReference type="Gene3D" id="3.40.50.450">
    <property type="match status" value="1"/>
</dbReference>
<dbReference type="HAMAP" id="MF_01575">
    <property type="entry name" value="UPF0398"/>
    <property type="match status" value="1"/>
</dbReference>
<dbReference type="InterPro" id="IPR010697">
    <property type="entry name" value="YspA"/>
</dbReference>
<dbReference type="NCBIfam" id="NF010181">
    <property type="entry name" value="PRK13660.1"/>
    <property type="match status" value="1"/>
</dbReference>
<dbReference type="PANTHER" id="PTHR38440:SF1">
    <property type="entry name" value="UPF0398 PROTEIN SPR0331"/>
    <property type="match status" value="1"/>
</dbReference>
<dbReference type="PANTHER" id="PTHR38440">
    <property type="entry name" value="UPF0398 PROTEIN YPSA"/>
    <property type="match status" value="1"/>
</dbReference>
<dbReference type="Pfam" id="PF06908">
    <property type="entry name" value="YpsA"/>
    <property type="match status" value="1"/>
</dbReference>
<dbReference type="PIRSF" id="PIRSF021290">
    <property type="entry name" value="DUF1273"/>
    <property type="match status" value="1"/>
</dbReference>
<dbReference type="SUPFAM" id="SSF102405">
    <property type="entry name" value="MCP/YpsA-like"/>
    <property type="match status" value="1"/>
</dbReference>
<proteinExistence type="inferred from homology"/>
<protein>
    <recommendedName>
        <fullName evidence="1">UPF0398 protein lwe1908</fullName>
    </recommendedName>
</protein>
<evidence type="ECO:0000255" key="1">
    <source>
        <dbReference type="HAMAP-Rule" id="MF_01575"/>
    </source>
</evidence>